<keyword id="KW-0119">Carbohydrate metabolism</keyword>
<keyword id="KW-0313">Glucose metabolism</keyword>
<keyword id="KW-0433">Leucine-rich repeat</keyword>
<keyword id="KW-0472">Membrane</keyword>
<keyword id="KW-0597">Phosphoprotein</keyword>
<keyword id="KW-1185">Reference proteome</keyword>
<keyword id="KW-0677">Repeat</keyword>
<keyword id="KW-0833">Ubl conjugation pathway</keyword>
<organism>
    <name type="scientific">Saccharomyces cerevisiae (strain ATCC 204508 / S288c)</name>
    <name type="common">Baker's yeast</name>
    <dbReference type="NCBI Taxonomy" id="559292"/>
    <lineage>
        <taxon>Eukaryota</taxon>
        <taxon>Fungi</taxon>
        <taxon>Dikarya</taxon>
        <taxon>Ascomycota</taxon>
        <taxon>Saccharomycotina</taxon>
        <taxon>Saccharomycetes</taxon>
        <taxon>Saccharomycetales</taxon>
        <taxon>Saccharomycetaceae</taxon>
        <taxon>Saccharomyces</taxon>
    </lineage>
</organism>
<gene>
    <name type="primary">GRR1</name>
    <name type="synonym">CAT80</name>
    <name type="synonym">COT2</name>
    <name type="ordered locus">YJR090C</name>
    <name type="ORF">J1885</name>
</gene>
<evidence type="ECO:0000255" key="1">
    <source>
        <dbReference type="PROSITE-ProRule" id="PRU00080"/>
    </source>
</evidence>
<evidence type="ECO:0000256" key="2">
    <source>
        <dbReference type="SAM" id="MobiDB-lite"/>
    </source>
</evidence>
<evidence type="ECO:0000269" key="3">
    <source>
    </source>
</evidence>
<evidence type="ECO:0000269" key="4">
    <source>
    </source>
</evidence>
<evidence type="ECO:0000269" key="5">
    <source>
    </source>
</evidence>
<evidence type="ECO:0000269" key="6">
    <source>
    </source>
</evidence>
<evidence type="ECO:0000269" key="7">
    <source>
    </source>
</evidence>
<evidence type="ECO:0007744" key="8">
    <source>
    </source>
</evidence>
<sequence>MDQDNNNHNDSNRLHPPDIHPNLGPQLWLNSSGDFDDNNNNNNNNNNNNSTRPQMPSRTRETATSERNASEVRDATLNNIFRFDSIQRETLLPTNNGQPLNQNFSLTFQPQQQTNALNGIDINTVNTNLMNGVNVQIDQLNRLLPNLPEEERKQIHEFKLIVGKKIQEFLVVIEKRRKKILNEIELDNLKLKELRIDNSPQAISYLHKLQRMRLRALETENMEIRNLRLKILTIIEEYKKSLYAYCHSKLRGQQVENPTDNFIIWINSIDTTESSDLKEGLQDLSRYSRQFINNVLSNPSNQNICTSVTRRSPVFALNMLPSEILHLILDKLNQKYDIVKFLTVSKLWAEIIVKILYYRPHINKKSQLDLFLRTMKLTSEETVFNYRLMIKRLNFSFVGDYMHDTELNYFVGCKNLERLTLVFCKHITSVPISAVLRGCKFLQSVDITGIRDVSDDVFDTLATYCPRVQGFYVPQARNVTFDSLRNFIVHSPMLKRIKITANNNMNDELVELLANKCPLLVEVDITLSPNVTDSSLLKLLTRLVQLREFRITHNTNITDNLFQELSKVVDDMPSLRLIDLSGCENITDKTIESIVNLAPKLRNVFLGKCSRITDASLFQLSKLGKNLQTVHFGHCFNITDNGVRALFHSCTRIQYVDFACCTNLTNRTLYELADLPKLKRIGLVKCTQMTDEGLLNMVSLRGRNDTLERVHLSYCSNLTIYPIYELLMSCPRLSHLSLTAVPSFLRPDITMYCRPAPSDFSENQRQIFCVFSGKGVHKLRHYLVNLTSPAFGPHVDVNDVLTKYIRSKNLIFNGETLEDALRRIITDLNQDSAAIIAATGLNQINGLNNDFLFQNINFERIDEVFSWYLNTFDGIRMSSEEVNSLLLQVNKTFCEDPFSDVDDDQDYVVAPGVNREINSEMCHIVRKFHELNDHIDDFEVNVASLVRVQFQFTGFLLHEMTQTYMQMIELNRQICLVQKTVQESGNIDYQKGLLIWRLLFIDKFIMVVQKYKLSTVVLRLYLKDNITLLTRQRELLIAHQRSAWNNNNDNDANRNANNIVNIVSDAGANDTSNNETNNGNDDNETENPNFWRQFGNRMQISPDQMRNLQMGLRNQNMVRNNNNNTIDESMPDTAIDSQMDEASGTPDEDML</sequence>
<protein>
    <recommendedName>
        <fullName>SCF E3 ubiquitin ligase complex F-box protein GRR1</fullName>
    </recommendedName>
    <alternativeName>
        <fullName>F-box and leucine-rich repeat protein GRR1</fullName>
    </alternativeName>
    <alternativeName>
        <fullName>F-box/LRR-repeat protein GRR1</fullName>
    </alternativeName>
</protein>
<accession>P24814</accession>
<accession>D6VWQ8</accession>
<reference key="1">
    <citation type="journal article" date="1991" name="Mol. Cell. Biol.">
        <title>GRR1 of Saccharomyces cerevisiae is required for glucose repression and encodes a protein with leucine-rich repeats.</title>
        <authorList>
            <person name="Flick J.S."/>
            <person name="Johnston M."/>
        </authorList>
    </citation>
    <scope>NUCLEOTIDE SEQUENCE [GENOMIC DNA]</scope>
    <scope>FUNCTION</scope>
    <scope>SUBCELLULAR LOCATION</scope>
    <scope>LEUCINE-RICH REPEATS</scope>
</reference>
<reference key="2">
    <citation type="journal article" date="1996" name="Yeast">
        <title>Analysis of a 62 kb DNA sequence of chromosome X reveals 36 open reading frames and a gene cluster with a counterpart on chromosome XI.</title>
        <authorList>
            <person name="Huang M.-E."/>
            <person name="Manus V."/>
            <person name="Chuat J.-C."/>
            <person name="Galibert F."/>
        </authorList>
    </citation>
    <scope>NUCLEOTIDE SEQUENCE [GENOMIC DNA]</scope>
    <source>
        <strain>ATCC 204508 / S288c</strain>
    </source>
</reference>
<reference key="3">
    <citation type="journal article" date="1996" name="EMBO J.">
        <title>Complete nucleotide sequence of Saccharomyces cerevisiae chromosome X.</title>
        <authorList>
            <person name="Galibert F."/>
            <person name="Alexandraki D."/>
            <person name="Baur A."/>
            <person name="Boles E."/>
            <person name="Chalwatzis N."/>
            <person name="Chuat J.-C."/>
            <person name="Coster F."/>
            <person name="Cziepluch C."/>
            <person name="de Haan M."/>
            <person name="Domdey H."/>
            <person name="Durand P."/>
            <person name="Entian K.-D."/>
            <person name="Gatius M."/>
            <person name="Goffeau A."/>
            <person name="Grivell L.A."/>
            <person name="Hennemann A."/>
            <person name="Herbert C.J."/>
            <person name="Heumann K."/>
            <person name="Hilger F."/>
            <person name="Hollenberg C.P."/>
            <person name="Huang M.-E."/>
            <person name="Jacq C."/>
            <person name="Jauniaux J.-C."/>
            <person name="Katsoulou C."/>
            <person name="Kirchrath L."/>
            <person name="Kleine K."/>
            <person name="Kordes E."/>
            <person name="Koetter P."/>
            <person name="Liebl S."/>
            <person name="Louis E.J."/>
            <person name="Manus V."/>
            <person name="Mewes H.-W."/>
            <person name="Miosga T."/>
            <person name="Obermaier B."/>
            <person name="Perea J."/>
            <person name="Pohl T.M."/>
            <person name="Portetelle D."/>
            <person name="Pujol A."/>
            <person name="Purnelle B."/>
            <person name="Ramezani Rad M."/>
            <person name="Rasmussen S.W."/>
            <person name="Rose M."/>
            <person name="Rossau R."/>
            <person name="Schaaff-Gerstenschlaeger I."/>
            <person name="Smits P.H.M."/>
            <person name="Scarcez T."/>
            <person name="Soriano N."/>
            <person name="To Van D."/>
            <person name="Tzermia M."/>
            <person name="Van Broekhoven A."/>
            <person name="Vandenbol M."/>
            <person name="Wedler H."/>
            <person name="von Wettstein D."/>
            <person name="Wambutt R."/>
            <person name="Zagulski M."/>
            <person name="Zollner A."/>
            <person name="Karpfinger-Hartl L."/>
        </authorList>
    </citation>
    <scope>NUCLEOTIDE SEQUENCE [LARGE SCALE GENOMIC DNA]</scope>
    <source>
        <strain>ATCC 204508 / S288c</strain>
    </source>
</reference>
<reference key="4">
    <citation type="journal article" date="2014" name="G3 (Bethesda)">
        <title>The reference genome sequence of Saccharomyces cerevisiae: Then and now.</title>
        <authorList>
            <person name="Engel S.R."/>
            <person name="Dietrich F.S."/>
            <person name="Fisk D.G."/>
            <person name="Binkley G."/>
            <person name="Balakrishnan R."/>
            <person name="Costanzo M.C."/>
            <person name="Dwight S.S."/>
            <person name="Hitz B.C."/>
            <person name="Karra K."/>
            <person name="Nash R.S."/>
            <person name="Weng S."/>
            <person name="Wong E.D."/>
            <person name="Lloyd P."/>
            <person name="Skrzypek M.S."/>
            <person name="Miyasato S.R."/>
            <person name="Simison M."/>
            <person name="Cherry J.M."/>
        </authorList>
    </citation>
    <scope>GENOME REANNOTATION</scope>
    <source>
        <strain>ATCC 204508 / S288c</strain>
    </source>
</reference>
<reference key="5">
    <citation type="journal article" date="1995" name="Genes Dev.">
        <title>G1 cyclin turnover and nutrient uptake are controlled by a common pathway in yeast.</title>
        <authorList>
            <person name="Barral Y."/>
            <person name="Jentsch S."/>
            <person name="Mann C."/>
        </authorList>
    </citation>
    <scope>FUNCTION IN UBIQUITINATION OF CLN1 AND CLN2</scope>
</reference>
<reference key="6">
    <citation type="journal article" date="1998" name="EMBO J.">
        <title>The Cdc42p effector Gic2p is targeted for ubiquitin-dependent degradation by the SCFGrr1 complex.</title>
        <authorList>
            <person name="Jaquenoud M."/>
            <person name="Gulli M.P."/>
            <person name="Peter K."/>
            <person name="Peter M."/>
        </authorList>
    </citation>
    <scope>FUNCTION IN UBIQUITINATION OF GIC2</scope>
</reference>
<reference key="7">
    <citation type="journal article" date="1999" name="Science">
        <title>Reconstitution of G1 cyclin ubiquitination with complexes containing SCFGrr1 and Rbx1.</title>
        <authorList>
            <person name="Skowyra D."/>
            <person name="Koepp D.M."/>
            <person name="Kamura T."/>
            <person name="Conrad M.N."/>
            <person name="Conaway R.C."/>
            <person name="Conaway J.W."/>
            <person name="Elledge S.J."/>
            <person name="Harper J.W."/>
        </authorList>
    </citation>
    <scope>IDENTIFICATION IN SCF COMPLEX</scope>
    <scope>FUNCTION IN UBIQUITINATION OF CLN1</scope>
</reference>
<reference key="8">
    <citation type="journal article" date="2004" name="Proteins">
        <title>Functional interaction of 13 yeast SCF complexes with a set of yeast E2 enzymes in vitro.</title>
        <authorList>
            <person name="Kus B.M."/>
            <person name="Caldon C.E."/>
            <person name="Andorn-Broza R."/>
            <person name="Edwards A.M."/>
        </authorList>
    </citation>
    <scope>INTERACTION WITH SKP1</scope>
    <scope>RECONSTITUTION OF THE SCF(GRR1) COMPLEX</scope>
</reference>
<reference key="9">
    <citation type="journal article" date="2008" name="Mol. Cell. Proteomics">
        <title>A multidimensional chromatography technology for in-depth phosphoproteome analysis.</title>
        <authorList>
            <person name="Albuquerque C.P."/>
            <person name="Smolka M.B."/>
            <person name="Payne S.H."/>
            <person name="Bafna V."/>
            <person name="Eng J."/>
            <person name="Zhou H."/>
        </authorList>
    </citation>
    <scope>PHOSPHORYLATION [LARGE SCALE ANALYSIS] AT SER-199 AND SER-300</scope>
    <scope>IDENTIFICATION BY MASS SPECTROMETRY [LARGE SCALE ANALYSIS]</scope>
</reference>
<feature type="chain" id="PRO_0000119968" description="SCF E3 ubiquitin ligase complex F-box protein GRR1">
    <location>
        <begin position="1"/>
        <end position="1151"/>
    </location>
</feature>
<feature type="domain" description="F-box" evidence="1">
    <location>
        <begin position="314"/>
        <end position="361"/>
    </location>
</feature>
<feature type="repeat" description="LRR 1" evidence="5">
    <location>
        <begin position="399"/>
        <end position="423"/>
    </location>
</feature>
<feature type="repeat" description="LRR 2" evidence="5">
    <location>
        <begin position="424"/>
        <end position="449"/>
    </location>
</feature>
<feature type="repeat" description="LRR 3" evidence="5">
    <location>
        <begin position="450"/>
        <end position="475"/>
    </location>
</feature>
<feature type="repeat" description="LRR 4" evidence="5">
    <location>
        <begin position="476"/>
        <end position="501"/>
    </location>
</feature>
<feature type="repeat" description="LRR 5" evidence="5">
    <location>
        <begin position="502"/>
        <end position="527"/>
    </location>
</feature>
<feature type="repeat" description="LRR 6" evidence="5">
    <location>
        <begin position="528"/>
        <end position="553"/>
    </location>
</feature>
<feature type="repeat" description="LRR 7" evidence="5">
    <location>
        <begin position="554"/>
        <end position="582"/>
    </location>
</feature>
<feature type="repeat" description="LRR 8" evidence="5">
    <location>
        <begin position="583"/>
        <end position="608"/>
    </location>
</feature>
<feature type="repeat" description="LRR 9" evidence="5">
    <location>
        <begin position="609"/>
        <end position="634"/>
    </location>
</feature>
<feature type="repeat" description="LRR 10" evidence="5">
    <location>
        <begin position="635"/>
        <end position="660"/>
    </location>
</feature>
<feature type="repeat" description="LRR 11" evidence="5">
    <location>
        <begin position="661"/>
        <end position="685"/>
    </location>
</feature>
<feature type="repeat" description="LRR 12" evidence="5">
    <location>
        <begin position="686"/>
        <end position="714"/>
    </location>
</feature>
<feature type="repeat" description="LRR 13" evidence="5">
    <location>
        <begin position="715"/>
        <end position="740"/>
    </location>
</feature>
<feature type="region of interest" description="Disordered" evidence="2">
    <location>
        <begin position="1"/>
        <end position="72"/>
    </location>
</feature>
<feature type="region of interest" description="Disordered" evidence="2">
    <location>
        <begin position="1066"/>
        <end position="1090"/>
    </location>
</feature>
<feature type="region of interest" description="Disordered" evidence="2">
    <location>
        <begin position="1118"/>
        <end position="1151"/>
    </location>
</feature>
<feature type="compositionally biased region" description="Basic and acidic residues" evidence="2">
    <location>
        <begin position="1"/>
        <end position="18"/>
    </location>
</feature>
<feature type="compositionally biased region" description="Low complexity" evidence="2">
    <location>
        <begin position="38"/>
        <end position="49"/>
    </location>
</feature>
<feature type="compositionally biased region" description="Basic and acidic residues" evidence="2">
    <location>
        <begin position="58"/>
        <end position="72"/>
    </location>
</feature>
<feature type="compositionally biased region" description="Low complexity" evidence="2">
    <location>
        <begin position="1066"/>
        <end position="1080"/>
    </location>
</feature>
<feature type="modified residue" description="Phosphoserine" evidence="8">
    <location>
        <position position="199"/>
    </location>
</feature>
<feature type="modified residue" description="Phosphoserine" evidence="8">
    <location>
        <position position="300"/>
    </location>
</feature>
<proteinExistence type="evidence at protein level"/>
<name>GRR1_YEAST</name>
<dbReference type="EMBL" id="M59247">
    <property type="protein sequence ID" value="AAA34652.1"/>
    <property type="molecule type" value="Genomic_DNA"/>
</dbReference>
<dbReference type="EMBL" id="Z49590">
    <property type="protein sequence ID" value="CAA89617.1"/>
    <property type="molecule type" value="Genomic_DNA"/>
</dbReference>
<dbReference type="EMBL" id="L47993">
    <property type="protein sequence ID" value="AAB39313.1"/>
    <property type="molecule type" value="Genomic_DNA"/>
</dbReference>
<dbReference type="EMBL" id="BK006943">
    <property type="protein sequence ID" value="DAA08874.1"/>
    <property type="molecule type" value="Genomic_DNA"/>
</dbReference>
<dbReference type="PIR" id="A41529">
    <property type="entry name" value="A41529"/>
</dbReference>
<dbReference type="RefSeq" id="NP_012623.1">
    <property type="nucleotide sequence ID" value="NM_001181747.1"/>
</dbReference>
<dbReference type="SMR" id="P24814"/>
<dbReference type="BioGRID" id="33844">
    <property type="interactions" value="115"/>
</dbReference>
<dbReference type="ComplexPortal" id="CPX-3241">
    <property type="entry name" value="SCF-Grr1 ubiquitin ligase complex"/>
</dbReference>
<dbReference type="DIP" id="DIP-1626N"/>
<dbReference type="FunCoup" id="P24814">
    <property type="interactions" value="312"/>
</dbReference>
<dbReference type="IntAct" id="P24814">
    <property type="interactions" value="27"/>
</dbReference>
<dbReference type="MINT" id="P24814"/>
<dbReference type="STRING" id="4932.YJR090C"/>
<dbReference type="GlyGen" id="P24814">
    <property type="glycosylation" value="3 sites, 1 O-linked glycan (3 sites)"/>
</dbReference>
<dbReference type="iPTMnet" id="P24814"/>
<dbReference type="PaxDb" id="4932-YJR090C"/>
<dbReference type="PeptideAtlas" id="P24814"/>
<dbReference type="EnsemblFungi" id="YJR090C_mRNA">
    <property type="protein sequence ID" value="YJR090C"/>
    <property type="gene ID" value="YJR090C"/>
</dbReference>
<dbReference type="GeneID" id="853552"/>
<dbReference type="KEGG" id="sce:YJR090C"/>
<dbReference type="AGR" id="SGD:S000003850"/>
<dbReference type="SGD" id="S000003850">
    <property type="gene designation" value="GRR1"/>
</dbReference>
<dbReference type="VEuPathDB" id="FungiDB:YJR090C"/>
<dbReference type="eggNOG" id="KOG1947">
    <property type="taxonomic scope" value="Eukaryota"/>
</dbReference>
<dbReference type="GeneTree" id="ENSGT00940000170586"/>
<dbReference type="HOGENOM" id="CLU_008058_0_0_1"/>
<dbReference type="InParanoid" id="P24814"/>
<dbReference type="OMA" id="VDFACCT"/>
<dbReference type="OrthoDB" id="10257471at2759"/>
<dbReference type="BioCyc" id="YEAST:G3O-31717-MONOMER"/>
<dbReference type="UniPathway" id="UPA00143"/>
<dbReference type="BioGRID-ORCS" id="853552">
    <property type="hits" value="2 hits in 10 CRISPR screens"/>
</dbReference>
<dbReference type="PRO" id="PR:P24814"/>
<dbReference type="Proteomes" id="UP000002311">
    <property type="component" value="Chromosome X"/>
</dbReference>
<dbReference type="RNAct" id="P24814">
    <property type="molecule type" value="protein"/>
</dbReference>
<dbReference type="GO" id="GO:0000142">
    <property type="term" value="C:cellular bud neck contractile ring"/>
    <property type="evidence" value="ECO:0000314"/>
    <property type="project" value="SGD"/>
</dbReference>
<dbReference type="GO" id="GO:0005737">
    <property type="term" value="C:cytoplasm"/>
    <property type="evidence" value="ECO:0000314"/>
    <property type="project" value="SGD"/>
</dbReference>
<dbReference type="GO" id="GO:0016020">
    <property type="term" value="C:membrane"/>
    <property type="evidence" value="ECO:0007669"/>
    <property type="project" value="UniProtKB-SubCell"/>
</dbReference>
<dbReference type="GO" id="GO:0005634">
    <property type="term" value="C:nucleus"/>
    <property type="evidence" value="ECO:0000314"/>
    <property type="project" value="SGD"/>
</dbReference>
<dbReference type="GO" id="GO:0019005">
    <property type="term" value="C:SCF ubiquitin ligase complex"/>
    <property type="evidence" value="ECO:0000314"/>
    <property type="project" value="ComplexPortal"/>
</dbReference>
<dbReference type="GO" id="GO:0030674">
    <property type="term" value="F:protein-macromolecule adaptor activity"/>
    <property type="evidence" value="ECO:0000314"/>
    <property type="project" value="SGD"/>
</dbReference>
<dbReference type="GO" id="GO:0004842">
    <property type="term" value="F:ubiquitin-protein transferase activity"/>
    <property type="evidence" value="ECO:0000314"/>
    <property type="project" value="SGD"/>
</dbReference>
<dbReference type="GO" id="GO:0071406">
    <property type="term" value="P:cellular response to methylmercury"/>
    <property type="evidence" value="ECO:0000315"/>
    <property type="project" value="SGD"/>
</dbReference>
<dbReference type="GO" id="GO:0034599">
    <property type="term" value="P:cellular response to oxidative stress"/>
    <property type="evidence" value="ECO:0000315"/>
    <property type="project" value="SGD"/>
</dbReference>
<dbReference type="GO" id="GO:0000082">
    <property type="term" value="P:G1/S transition of mitotic cell cycle"/>
    <property type="evidence" value="ECO:0000314"/>
    <property type="project" value="ComplexPortal"/>
</dbReference>
<dbReference type="GO" id="GO:0006006">
    <property type="term" value="P:glucose metabolic process"/>
    <property type="evidence" value="ECO:0007669"/>
    <property type="project" value="UniProtKB-KW"/>
</dbReference>
<dbReference type="GO" id="GO:0000751">
    <property type="term" value="P:mitotic cell cycle G1 arrest in response to pheromone"/>
    <property type="evidence" value="ECO:0000315"/>
    <property type="project" value="SGD"/>
</dbReference>
<dbReference type="GO" id="GO:0010828">
    <property type="term" value="P:positive regulation of D-glucose transmembrane transport"/>
    <property type="evidence" value="ECO:0000314"/>
    <property type="project" value="ComplexPortal"/>
</dbReference>
<dbReference type="GO" id="GO:0000209">
    <property type="term" value="P:protein polyubiquitination"/>
    <property type="evidence" value="ECO:0000315"/>
    <property type="project" value="SGD"/>
</dbReference>
<dbReference type="GO" id="GO:0019222">
    <property type="term" value="P:regulation of metabolic process"/>
    <property type="evidence" value="ECO:0000303"/>
    <property type="project" value="ComplexPortal"/>
</dbReference>
<dbReference type="GO" id="GO:0031146">
    <property type="term" value="P:SCF-dependent proteasomal ubiquitin-dependent protein catabolic process"/>
    <property type="evidence" value="ECO:0000315"/>
    <property type="project" value="SGD"/>
</dbReference>
<dbReference type="GO" id="GO:0006511">
    <property type="term" value="P:ubiquitin-dependent protein catabolic process"/>
    <property type="evidence" value="ECO:0000314"/>
    <property type="project" value="ComplexPortal"/>
</dbReference>
<dbReference type="FunFam" id="3.80.10.10:FF:000251">
    <property type="entry name" value="Ubiquitin ligase complex F-box protein GRR1"/>
    <property type="match status" value="1"/>
</dbReference>
<dbReference type="FunFam" id="3.80.10.10:FF:000877">
    <property type="entry name" value="Ubiquitin ligase complex F-box protein GRR1"/>
    <property type="match status" value="1"/>
</dbReference>
<dbReference type="Gene3D" id="3.80.10.10">
    <property type="entry name" value="Ribonuclease Inhibitor"/>
    <property type="match status" value="2"/>
</dbReference>
<dbReference type="InterPro" id="IPR001810">
    <property type="entry name" value="F-box_dom"/>
</dbReference>
<dbReference type="InterPro" id="IPR006553">
    <property type="entry name" value="Leu-rich_rpt_Cys-con_subtyp"/>
</dbReference>
<dbReference type="InterPro" id="IPR032675">
    <property type="entry name" value="LRR_dom_sf"/>
</dbReference>
<dbReference type="PANTHER" id="PTHR13318">
    <property type="entry name" value="PARTNER OF PAIRED, ISOFORM B-RELATED"/>
    <property type="match status" value="1"/>
</dbReference>
<dbReference type="Pfam" id="PF12937">
    <property type="entry name" value="F-box-like"/>
    <property type="match status" value="1"/>
</dbReference>
<dbReference type="SMART" id="SM00256">
    <property type="entry name" value="FBOX"/>
    <property type="match status" value="1"/>
</dbReference>
<dbReference type="SMART" id="SM00367">
    <property type="entry name" value="LRR_CC"/>
    <property type="match status" value="11"/>
</dbReference>
<dbReference type="SUPFAM" id="SSF52047">
    <property type="entry name" value="RNI-like"/>
    <property type="match status" value="2"/>
</dbReference>
<dbReference type="PROSITE" id="PS50181">
    <property type="entry name" value="FBOX"/>
    <property type="match status" value="1"/>
</dbReference>
<comment type="function">
    <text evidence="3 5 6 7">Substrate recognition component of a SCF (SKP1-CUL1-F-box protein) E3 ubiquitin-protein ligase complex which mediates the ubiquitination and subsequent proteasomal degradation of target proteins. Recognizes and directs ubiquitination of phosphorylated CLN1, CLN2 and GIC2. Probably constitutes the primary response element required for the generation or interpretation of the signal that induces glucose repression.</text>
</comment>
<comment type="pathway">
    <text>Protein modification; protein ubiquitination.</text>
</comment>
<comment type="subunit">
    <text evidence="3 4">Interacts with SKP1. Component of the probable SCF(GRR1) complex containing CDC53, SKP1, RBX1 and GRR1.</text>
</comment>
<comment type="interaction">
    <interactant intactId="EBI-7898">
        <id>P24814</id>
    </interactant>
    <interactant intactId="EBI-4321">
        <id>Q12018</id>
        <label>CDC53</label>
    </interactant>
    <organismsDiffer>false</organismsDiffer>
    <experiments>10</experiments>
</comment>
<comment type="interaction">
    <interactant intactId="EBI-7898">
        <id>P24814</id>
    </interactant>
    <interactant intactId="EBI-4090">
        <id>P52286</id>
        <label>SKP1</label>
    </interactant>
    <organismsDiffer>false</organismsDiffer>
    <experiments>9</experiments>
</comment>
<comment type="subcellular location">
    <subcellularLocation>
        <location evidence="5">Membrane</location>
    </subcellularLocation>
    <text>Associated with the particulate fraction. Probably forms a complex by protein-protein interactions via its leucine-rich segment.</text>
</comment>
<comment type="induction">
    <text>Expressed constitutively at low levels.</text>
</comment>